<evidence type="ECO:0000269" key="1">
    <source>
    </source>
</evidence>
<evidence type="ECO:0000303" key="2">
    <source>
    </source>
</evidence>
<evidence type="ECO:0000305" key="3"/>
<gene>
    <name evidence="2" type="primary">Mfi</name>
</gene>
<sequence length="315" mass="36933">MSVKHIQDNSNQEIAARIIQRAWKTFLNVSVYQHFKSLIDLRRQGEPRQIVRYINPKEAQLLDAAAGVQVRFRLGGVRFPPEIYYKIFTHRHIEDLCANSPRDYTKLPARYTSHNKDDPPQVEDNSGWYRRVENNGWRPVSYRFWMPLESGVVDSTKESEFHFSKLKRKQDLEKKRKIKKIDWMRQMYYMGSLEAKATDNETLGLIHKATKGLIKSIEDGGVDSVMEWEVDEVLNWTNTLNFDEYIASWRETATSNSSANLKDVKLQRIQKSLQSNIYGDEAKQAEESLYDDSTYYENAYTKQFTRLTPDSMFGM</sequence>
<dbReference type="EMBL" id="AK016083">
    <property type="protein sequence ID" value="BAB30107.1"/>
    <property type="molecule type" value="mRNA"/>
</dbReference>
<dbReference type="EMBL" id="AK153618">
    <property type="protein sequence ID" value="BAE32121.1"/>
    <property type="molecule type" value="mRNA"/>
</dbReference>
<dbReference type="EMBL" id="BC115639">
    <property type="protein sequence ID" value="AAI15640.1"/>
    <property type="molecule type" value="mRNA"/>
</dbReference>
<dbReference type="CCDS" id="CCDS23183.1"/>
<dbReference type="RefSeq" id="NP_083523.1">
    <property type="nucleotide sequence ID" value="NM_029247.3"/>
</dbReference>
<dbReference type="RefSeq" id="XP_006510715.1">
    <property type="nucleotide sequence ID" value="XM_006510652.3"/>
</dbReference>
<dbReference type="RefSeq" id="XP_006510716.1">
    <property type="nucleotide sequence ID" value="XM_006510653.3"/>
</dbReference>
<dbReference type="RefSeq" id="XP_006510717.1">
    <property type="nucleotide sequence ID" value="XM_006510654.3"/>
</dbReference>
<dbReference type="RefSeq" id="XP_017169167.1">
    <property type="nucleotide sequence ID" value="XM_017313678.1"/>
</dbReference>
<dbReference type="SMR" id="Q9D4W2"/>
<dbReference type="FunCoup" id="Q9D4W2">
    <property type="interactions" value="11"/>
</dbReference>
<dbReference type="STRING" id="10090.ENSMUSP00000005262"/>
<dbReference type="iPTMnet" id="Q9D4W2"/>
<dbReference type="PhosphoSitePlus" id="Q9D4W2"/>
<dbReference type="PaxDb" id="10090-ENSMUSP00000005262"/>
<dbReference type="Antibodypedia" id="50806">
    <property type="antibodies" value="66 antibodies from 12 providers"/>
</dbReference>
<dbReference type="Ensembl" id="ENSMUST00000005262.2">
    <property type="protein sequence ID" value="ENSMUSP00000005262.2"/>
    <property type="gene ID" value="ENSMUSG00000005131.5"/>
</dbReference>
<dbReference type="GeneID" id="75311"/>
<dbReference type="KEGG" id="mmu:75311"/>
<dbReference type="UCSC" id="uc009pmc.1">
    <property type="organism name" value="mouse"/>
</dbReference>
<dbReference type="AGR" id="MGI:1922561"/>
<dbReference type="MGI" id="MGI:1922561">
    <property type="gene designation" value="4930550C14Rik"/>
</dbReference>
<dbReference type="VEuPathDB" id="HostDB:ENSMUSG00000005131"/>
<dbReference type="eggNOG" id="ENOG502QSTG">
    <property type="taxonomic scope" value="Eukaryota"/>
</dbReference>
<dbReference type="GeneTree" id="ENSGT00510000048394"/>
<dbReference type="HOGENOM" id="CLU_068479_0_0_1"/>
<dbReference type="InParanoid" id="Q9D4W2"/>
<dbReference type="OMA" id="KMDFHYS"/>
<dbReference type="OrthoDB" id="10253073at2759"/>
<dbReference type="PhylomeDB" id="Q9D4W2"/>
<dbReference type="TreeFam" id="TF328500"/>
<dbReference type="BioGRID-ORCS" id="75311">
    <property type="hits" value="4 hits in 76 CRISPR screens"/>
</dbReference>
<dbReference type="PRO" id="PR:Q9D4W2"/>
<dbReference type="Proteomes" id="UP000000589">
    <property type="component" value="Chromosome 9"/>
</dbReference>
<dbReference type="RNAct" id="Q9D4W2">
    <property type="molecule type" value="protein"/>
</dbReference>
<dbReference type="Bgee" id="ENSMUSG00000005131">
    <property type="expression patterns" value="Expressed in animal zygote and 61 other cell types or tissues"/>
</dbReference>
<dbReference type="ExpressionAtlas" id="Q9D4W2">
    <property type="expression patterns" value="baseline and differential"/>
</dbReference>
<dbReference type="GO" id="GO:0005829">
    <property type="term" value="C:cytosol"/>
    <property type="evidence" value="ECO:0000314"/>
    <property type="project" value="UniProtKB"/>
</dbReference>
<dbReference type="GO" id="GO:0005741">
    <property type="term" value="C:mitochondrial outer membrane"/>
    <property type="evidence" value="ECO:0000314"/>
    <property type="project" value="UniProtKB"/>
</dbReference>
<dbReference type="GO" id="GO:0090258">
    <property type="term" value="P:negative regulation of mitochondrial fission"/>
    <property type="evidence" value="ECO:0000315"/>
    <property type="project" value="UniProtKB"/>
</dbReference>
<dbReference type="GO" id="GO:1903215">
    <property type="term" value="P:negative regulation of protein targeting to mitochondrion"/>
    <property type="evidence" value="ECO:0000315"/>
    <property type="project" value="UniProtKB"/>
</dbReference>
<dbReference type="CDD" id="cd21090">
    <property type="entry name" value="C11orf65"/>
    <property type="match status" value="1"/>
</dbReference>
<dbReference type="PANTHER" id="PTHR33504">
    <property type="entry name" value="NADH DEHYDROGENASE (UBIQUINONE) 1 BETA SUBCOMPLEX, 4"/>
    <property type="match status" value="1"/>
</dbReference>
<dbReference type="PANTHER" id="PTHR33504:SF2">
    <property type="entry name" value="PROTEIN MFI"/>
    <property type="match status" value="1"/>
</dbReference>
<keyword id="KW-0963">Cytoplasm</keyword>
<keyword id="KW-0472">Membrane</keyword>
<keyword id="KW-0496">Mitochondrion</keyword>
<keyword id="KW-1000">Mitochondrion outer membrane</keyword>
<keyword id="KW-1185">Reference proteome</keyword>
<comment type="function">
    <text evidence="1">Acts as an inhibitor of mitochondrial fission. Interacts with MFF and prevents DNM1L recruitment to mitochondria, promoting a more fused mitochondrial network.</text>
</comment>
<comment type="subunit">
    <text evidence="1">Can homodimerize (PubMed:30059978). Interacts with MFF; the interaction inhibits MFF interaction with DNM1L (PubMed:30059978).</text>
</comment>
<comment type="subcellular location">
    <subcellularLocation>
        <location evidence="1">Cytoplasm</location>
        <location evidence="1">Cytosol</location>
    </subcellularLocation>
    <subcellularLocation>
        <location evidence="1">Mitochondrion outer membrane</location>
    </subcellularLocation>
    <text evidence="1">Predominantly localizes to the cytosol, with a minor fraction at the outer mitochondrial membrane.</text>
</comment>
<comment type="tissue specificity">
    <text evidence="1">Enriched in the pancreatic beta cell and the testis and is expressed at low levels in other tissues tested.</text>
</comment>
<reference key="1">
    <citation type="journal article" date="2005" name="Science">
        <title>The transcriptional landscape of the mammalian genome.</title>
        <authorList>
            <person name="Carninci P."/>
            <person name="Kasukawa T."/>
            <person name="Katayama S."/>
            <person name="Gough J."/>
            <person name="Frith M.C."/>
            <person name="Maeda N."/>
            <person name="Oyama R."/>
            <person name="Ravasi T."/>
            <person name="Lenhard B."/>
            <person name="Wells C."/>
            <person name="Kodzius R."/>
            <person name="Shimokawa K."/>
            <person name="Bajic V.B."/>
            <person name="Brenner S.E."/>
            <person name="Batalov S."/>
            <person name="Forrest A.R."/>
            <person name="Zavolan M."/>
            <person name="Davis M.J."/>
            <person name="Wilming L.G."/>
            <person name="Aidinis V."/>
            <person name="Allen J.E."/>
            <person name="Ambesi-Impiombato A."/>
            <person name="Apweiler R."/>
            <person name="Aturaliya R.N."/>
            <person name="Bailey T.L."/>
            <person name="Bansal M."/>
            <person name="Baxter L."/>
            <person name="Beisel K.W."/>
            <person name="Bersano T."/>
            <person name="Bono H."/>
            <person name="Chalk A.M."/>
            <person name="Chiu K.P."/>
            <person name="Choudhary V."/>
            <person name="Christoffels A."/>
            <person name="Clutterbuck D.R."/>
            <person name="Crowe M.L."/>
            <person name="Dalla E."/>
            <person name="Dalrymple B.P."/>
            <person name="de Bono B."/>
            <person name="Della Gatta G."/>
            <person name="di Bernardo D."/>
            <person name="Down T."/>
            <person name="Engstrom P."/>
            <person name="Fagiolini M."/>
            <person name="Faulkner G."/>
            <person name="Fletcher C.F."/>
            <person name="Fukushima T."/>
            <person name="Furuno M."/>
            <person name="Futaki S."/>
            <person name="Gariboldi M."/>
            <person name="Georgii-Hemming P."/>
            <person name="Gingeras T.R."/>
            <person name="Gojobori T."/>
            <person name="Green R.E."/>
            <person name="Gustincich S."/>
            <person name="Harbers M."/>
            <person name="Hayashi Y."/>
            <person name="Hensch T.K."/>
            <person name="Hirokawa N."/>
            <person name="Hill D."/>
            <person name="Huminiecki L."/>
            <person name="Iacono M."/>
            <person name="Ikeo K."/>
            <person name="Iwama A."/>
            <person name="Ishikawa T."/>
            <person name="Jakt M."/>
            <person name="Kanapin A."/>
            <person name="Katoh M."/>
            <person name="Kawasawa Y."/>
            <person name="Kelso J."/>
            <person name="Kitamura H."/>
            <person name="Kitano H."/>
            <person name="Kollias G."/>
            <person name="Krishnan S.P."/>
            <person name="Kruger A."/>
            <person name="Kummerfeld S.K."/>
            <person name="Kurochkin I.V."/>
            <person name="Lareau L.F."/>
            <person name="Lazarevic D."/>
            <person name="Lipovich L."/>
            <person name="Liu J."/>
            <person name="Liuni S."/>
            <person name="McWilliam S."/>
            <person name="Madan Babu M."/>
            <person name="Madera M."/>
            <person name="Marchionni L."/>
            <person name="Matsuda H."/>
            <person name="Matsuzawa S."/>
            <person name="Miki H."/>
            <person name="Mignone F."/>
            <person name="Miyake S."/>
            <person name="Morris K."/>
            <person name="Mottagui-Tabar S."/>
            <person name="Mulder N."/>
            <person name="Nakano N."/>
            <person name="Nakauchi H."/>
            <person name="Ng P."/>
            <person name="Nilsson R."/>
            <person name="Nishiguchi S."/>
            <person name="Nishikawa S."/>
            <person name="Nori F."/>
            <person name="Ohara O."/>
            <person name="Okazaki Y."/>
            <person name="Orlando V."/>
            <person name="Pang K.C."/>
            <person name="Pavan W.J."/>
            <person name="Pavesi G."/>
            <person name="Pesole G."/>
            <person name="Petrovsky N."/>
            <person name="Piazza S."/>
            <person name="Reed J."/>
            <person name="Reid J.F."/>
            <person name="Ring B.Z."/>
            <person name="Ringwald M."/>
            <person name="Rost B."/>
            <person name="Ruan Y."/>
            <person name="Salzberg S.L."/>
            <person name="Sandelin A."/>
            <person name="Schneider C."/>
            <person name="Schoenbach C."/>
            <person name="Sekiguchi K."/>
            <person name="Semple C.A."/>
            <person name="Seno S."/>
            <person name="Sessa L."/>
            <person name="Sheng Y."/>
            <person name="Shibata Y."/>
            <person name="Shimada H."/>
            <person name="Shimada K."/>
            <person name="Silva D."/>
            <person name="Sinclair B."/>
            <person name="Sperling S."/>
            <person name="Stupka E."/>
            <person name="Sugiura K."/>
            <person name="Sultana R."/>
            <person name="Takenaka Y."/>
            <person name="Taki K."/>
            <person name="Tammoja K."/>
            <person name="Tan S.L."/>
            <person name="Tang S."/>
            <person name="Taylor M.S."/>
            <person name="Tegner J."/>
            <person name="Teichmann S.A."/>
            <person name="Ueda H.R."/>
            <person name="van Nimwegen E."/>
            <person name="Verardo R."/>
            <person name="Wei C.L."/>
            <person name="Yagi K."/>
            <person name="Yamanishi H."/>
            <person name="Zabarovsky E."/>
            <person name="Zhu S."/>
            <person name="Zimmer A."/>
            <person name="Hide W."/>
            <person name="Bult C."/>
            <person name="Grimmond S.M."/>
            <person name="Teasdale R.D."/>
            <person name="Liu E.T."/>
            <person name="Brusic V."/>
            <person name="Quackenbush J."/>
            <person name="Wahlestedt C."/>
            <person name="Mattick J.S."/>
            <person name="Hume D.A."/>
            <person name="Kai C."/>
            <person name="Sasaki D."/>
            <person name="Tomaru Y."/>
            <person name="Fukuda S."/>
            <person name="Kanamori-Katayama M."/>
            <person name="Suzuki M."/>
            <person name="Aoki J."/>
            <person name="Arakawa T."/>
            <person name="Iida J."/>
            <person name="Imamura K."/>
            <person name="Itoh M."/>
            <person name="Kato T."/>
            <person name="Kawaji H."/>
            <person name="Kawagashira N."/>
            <person name="Kawashima T."/>
            <person name="Kojima M."/>
            <person name="Kondo S."/>
            <person name="Konno H."/>
            <person name="Nakano K."/>
            <person name="Ninomiya N."/>
            <person name="Nishio T."/>
            <person name="Okada M."/>
            <person name="Plessy C."/>
            <person name="Shibata K."/>
            <person name="Shiraki T."/>
            <person name="Suzuki S."/>
            <person name="Tagami M."/>
            <person name="Waki K."/>
            <person name="Watahiki A."/>
            <person name="Okamura-Oho Y."/>
            <person name="Suzuki H."/>
            <person name="Kawai J."/>
            <person name="Hayashizaki Y."/>
        </authorList>
    </citation>
    <scope>NUCLEOTIDE SEQUENCE [LARGE SCALE MRNA]</scope>
    <source>
        <strain>C57BL/6J</strain>
        <tissue>Testis</tissue>
        <tissue>Thymus</tissue>
    </source>
</reference>
<reference key="2">
    <citation type="journal article" date="2004" name="Genome Res.">
        <title>The status, quality, and expansion of the NIH full-length cDNA project: the Mammalian Gene Collection (MGC).</title>
        <authorList>
            <consortium name="The MGC Project Team"/>
        </authorList>
    </citation>
    <scope>NUCLEOTIDE SEQUENCE [LARGE SCALE MRNA]</scope>
</reference>
<reference key="3">
    <citation type="journal article" date="2018" name="Endocrinology">
        <title>A Genetic Interaction Map of Insulin Production Identifies Mfi as an Inhibitor of Mitochondrial Fission.</title>
        <authorList>
            <person name="Lee J."/>
            <person name="Pappalardo Z."/>
            <person name="Chopra D.G."/>
            <person name="Hennings T.G."/>
            <person name="Vaughn I."/>
            <person name="Lan C."/>
            <person name="Choe J.J."/>
            <person name="Ang K."/>
            <person name="Chen S."/>
            <person name="Arkin M."/>
            <person name="McManus M.T."/>
            <person name="German M.S."/>
            <person name="Ku G.M."/>
        </authorList>
    </citation>
    <scope>FUNCTION</scope>
    <scope>TISSUE SPECIFICITY</scope>
    <scope>INTERACTION WITH MFF</scope>
    <scope>SUBCELLULAR LOCATION</scope>
    <scope>SUBUNIT</scope>
</reference>
<accession>Q9D4W2</accession>
<accession>Q3U5F8</accession>
<protein>
    <recommendedName>
        <fullName evidence="3">Protein MFI</fullName>
    </recommendedName>
    <alternativeName>
        <fullName evidence="2">Mitochondrial fission factor interactor</fullName>
    </alternativeName>
    <alternativeName>
        <fullName>Protein C11orf65 homolog</fullName>
    </alternativeName>
</protein>
<feature type="chain" id="PRO_0000263666" description="Protein MFI">
    <location>
        <begin position="1"/>
        <end position="315"/>
    </location>
</feature>
<feature type="sequence conflict" description="In Ref. 1; BAE32121." evidence="3" ref="1">
    <original>V</original>
    <variation>E</variation>
    <location>
        <position position="233"/>
    </location>
</feature>
<name>MFI_MOUSE</name>
<proteinExistence type="evidence at protein level"/>
<organism>
    <name type="scientific">Mus musculus</name>
    <name type="common">Mouse</name>
    <dbReference type="NCBI Taxonomy" id="10090"/>
    <lineage>
        <taxon>Eukaryota</taxon>
        <taxon>Metazoa</taxon>
        <taxon>Chordata</taxon>
        <taxon>Craniata</taxon>
        <taxon>Vertebrata</taxon>
        <taxon>Euteleostomi</taxon>
        <taxon>Mammalia</taxon>
        <taxon>Eutheria</taxon>
        <taxon>Euarchontoglires</taxon>
        <taxon>Glires</taxon>
        <taxon>Rodentia</taxon>
        <taxon>Myomorpha</taxon>
        <taxon>Muroidea</taxon>
        <taxon>Muridae</taxon>
        <taxon>Murinae</taxon>
        <taxon>Mus</taxon>
        <taxon>Mus</taxon>
    </lineage>
</organism>